<sequence length="143" mass="15904">MIINVFYKTKVPSHFRKTSLFKAGVSAALGKFASKKGEVNLIFVDGKEIHKINKEFLNHDYKTDVISFNYPFPQKGGEGLPFGDIFVCYDVAKENASLYGQGVLKEMLTYAVHGALHLAGMDDATPKERSAMDDETGRIILKI</sequence>
<accession>B2KAT6</accession>
<reference key="1">
    <citation type="journal article" date="2009" name="Appl. Environ. Microbiol.">
        <title>Genomic analysis of 'Elusimicrobium minutum,' the first cultivated representative of the phylum 'Elusimicrobia' (formerly termite group 1).</title>
        <authorList>
            <person name="Herlemann D.P.R."/>
            <person name="Geissinger O."/>
            <person name="Ikeda-Ohtsubo W."/>
            <person name="Kunin V."/>
            <person name="Sun H."/>
            <person name="Lapidus A."/>
            <person name="Hugenholtz P."/>
            <person name="Brune A."/>
        </authorList>
    </citation>
    <scope>NUCLEOTIDE SEQUENCE [LARGE SCALE GENOMIC DNA]</scope>
    <source>
        <strain>Pei191</strain>
    </source>
</reference>
<gene>
    <name evidence="1" type="primary">ybeY</name>
    <name type="ordered locus">Emin_0065</name>
</gene>
<organism>
    <name type="scientific">Elusimicrobium minutum (strain Pei191)</name>
    <dbReference type="NCBI Taxonomy" id="445932"/>
    <lineage>
        <taxon>Bacteria</taxon>
        <taxon>Pseudomonadati</taxon>
        <taxon>Elusimicrobiota</taxon>
        <taxon>Elusimicrobia</taxon>
        <taxon>Elusimicrobiales</taxon>
        <taxon>Elusimicrobiaceae</taxon>
        <taxon>Elusimicrobium</taxon>
    </lineage>
</organism>
<evidence type="ECO:0000255" key="1">
    <source>
        <dbReference type="HAMAP-Rule" id="MF_00009"/>
    </source>
</evidence>
<comment type="function">
    <text evidence="1">Single strand-specific metallo-endoribonuclease involved in late-stage 70S ribosome quality control and in maturation of the 3' terminus of the 16S rRNA.</text>
</comment>
<comment type="cofactor">
    <cofactor evidence="1">
        <name>Zn(2+)</name>
        <dbReference type="ChEBI" id="CHEBI:29105"/>
    </cofactor>
    <text evidence="1">Binds 1 zinc ion.</text>
</comment>
<comment type="subcellular location">
    <subcellularLocation>
        <location evidence="1">Cytoplasm</location>
    </subcellularLocation>
</comment>
<comment type="similarity">
    <text evidence="1">Belongs to the endoribonuclease YbeY family.</text>
</comment>
<protein>
    <recommendedName>
        <fullName evidence="1">Endoribonuclease YbeY</fullName>
        <ecNumber evidence="1">3.1.-.-</ecNumber>
    </recommendedName>
</protein>
<keyword id="KW-0963">Cytoplasm</keyword>
<keyword id="KW-0255">Endonuclease</keyword>
<keyword id="KW-0378">Hydrolase</keyword>
<keyword id="KW-0479">Metal-binding</keyword>
<keyword id="KW-0540">Nuclease</keyword>
<keyword id="KW-1185">Reference proteome</keyword>
<keyword id="KW-0690">Ribosome biogenesis</keyword>
<keyword id="KW-0698">rRNA processing</keyword>
<keyword id="KW-0862">Zinc</keyword>
<proteinExistence type="inferred from homology"/>
<name>YBEY_ELUMP</name>
<dbReference type="EC" id="3.1.-.-" evidence="1"/>
<dbReference type="EMBL" id="CP001055">
    <property type="protein sequence ID" value="ACC97632.1"/>
    <property type="molecule type" value="Genomic_DNA"/>
</dbReference>
<dbReference type="RefSeq" id="WP_012414247.1">
    <property type="nucleotide sequence ID" value="NC_010644.1"/>
</dbReference>
<dbReference type="SMR" id="B2KAT6"/>
<dbReference type="STRING" id="445932.Emin_0065"/>
<dbReference type="KEGG" id="emi:Emin_0065"/>
<dbReference type="HOGENOM" id="CLU_106710_3_3_0"/>
<dbReference type="OrthoDB" id="9811984at2"/>
<dbReference type="Proteomes" id="UP000001029">
    <property type="component" value="Chromosome"/>
</dbReference>
<dbReference type="GO" id="GO:0005737">
    <property type="term" value="C:cytoplasm"/>
    <property type="evidence" value="ECO:0007669"/>
    <property type="project" value="UniProtKB-SubCell"/>
</dbReference>
<dbReference type="GO" id="GO:0004222">
    <property type="term" value="F:metalloendopeptidase activity"/>
    <property type="evidence" value="ECO:0007669"/>
    <property type="project" value="InterPro"/>
</dbReference>
<dbReference type="GO" id="GO:0004521">
    <property type="term" value="F:RNA endonuclease activity"/>
    <property type="evidence" value="ECO:0007669"/>
    <property type="project" value="UniProtKB-UniRule"/>
</dbReference>
<dbReference type="GO" id="GO:0008270">
    <property type="term" value="F:zinc ion binding"/>
    <property type="evidence" value="ECO:0007669"/>
    <property type="project" value="UniProtKB-UniRule"/>
</dbReference>
<dbReference type="GO" id="GO:0006364">
    <property type="term" value="P:rRNA processing"/>
    <property type="evidence" value="ECO:0007669"/>
    <property type="project" value="UniProtKB-UniRule"/>
</dbReference>
<dbReference type="Gene3D" id="3.40.390.30">
    <property type="entry name" value="Metalloproteases ('zincins'), catalytic domain"/>
    <property type="match status" value="1"/>
</dbReference>
<dbReference type="HAMAP" id="MF_00009">
    <property type="entry name" value="Endoribonucl_YbeY"/>
    <property type="match status" value="1"/>
</dbReference>
<dbReference type="InterPro" id="IPR023091">
    <property type="entry name" value="MetalPrtase_cat_dom_sf_prd"/>
</dbReference>
<dbReference type="InterPro" id="IPR002036">
    <property type="entry name" value="YbeY"/>
</dbReference>
<dbReference type="InterPro" id="IPR020549">
    <property type="entry name" value="YbeY_CS"/>
</dbReference>
<dbReference type="NCBIfam" id="TIGR00043">
    <property type="entry name" value="rRNA maturation RNase YbeY"/>
    <property type="match status" value="1"/>
</dbReference>
<dbReference type="PANTHER" id="PTHR46986">
    <property type="entry name" value="ENDORIBONUCLEASE YBEY, CHLOROPLASTIC"/>
    <property type="match status" value="1"/>
</dbReference>
<dbReference type="PANTHER" id="PTHR46986:SF1">
    <property type="entry name" value="ENDORIBONUCLEASE YBEY, CHLOROPLASTIC"/>
    <property type="match status" value="1"/>
</dbReference>
<dbReference type="Pfam" id="PF02130">
    <property type="entry name" value="YbeY"/>
    <property type="match status" value="1"/>
</dbReference>
<dbReference type="SUPFAM" id="SSF55486">
    <property type="entry name" value="Metalloproteases ('zincins'), catalytic domain"/>
    <property type="match status" value="1"/>
</dbReference>
<dbReference type="PROSITE" id="PS01306">
    <property type="entry name" value="UPF0054"/>
    <property type="match status" value="1"/>
</dbReference>
<feature type="chain" id="PRO_1000201733" description="Endoribonuclease YbeY">
    <location>
        <begin position="1"/>
        <end position="143"/>
    </location>
</feature>
<feature type="binding site" evidence="1">
    <location>
        <position position="113"/>
    </location>
    <ligand>
        <name>Zn(2+)</name>
        <dbReference type="ChEBI" id="CHEBI:29105"/>
        <note>catalytic</note>
    </ligand>
</feature>
<feature type="binding site" evidence="1">
    <location>
        <position position="117"/>
    </location>
    <ligand>
        <name>Zn(2+)</name>
        <dbReference type="ChEBI" id="CHEBI:29105"/>
        <note>catalytic</note>
    </ligand>
</feature>
<feature type="binding site" evidence="1">
    <location>
        <position position="123"/>
    </location>
    <ligand>
        <name>Zn(2+)</name>
        <dbReference type="ChEBI" id="CHEBI:29105"/>
        <note>catalytic</note>
    </ligand>
</feature>